<name>AMY1_MOUSE</name>
<organism>
    <name type="scientific">Mus musculus</name>
    <name type="common">Mouse</name>
    <dbReference type="NCBI Taxonomy" id="10090"/>
    <lineage>
        <taxon>Eukaryota</taxon>
        <taxon>Metazoa</taxon>
        <taxon>Chordata</taxon>
        <taxon>Craniata</taxon>
        <taxon>Vertebrata</taxon>
        <taxon>Euteleostomi</taxon>
        <taxon>Mammalia</taxon>
        <taxon>Eutheria</taxon>
        <taxon>Euarchontoglires</taxon>
        <taxon>Glires</taxon>
        <taxon>Rodentia</taxon>
        <taxon>Myomorpha</taxon>
        <taxon>Muroidea</taxon>
        <taxon>Muridae</taxon>
        <taxon>Murinae</taxon>
        <taxon>Mus</taxon>
        <taxon>Mus</taxon>
    </lineage>
</organism>
<comment type="catalytic activity">
    <reaction evidence="2">
        <text>Endohydrolysis of (1-&gt;4)-alpha-D-glucosidic linkages in polysaccharides containing three or more (1-&gt;4)-alpha-linked D-glucose units.</text>
        <dbReference type="EC" id="3.2.1.1"/>
    </reaction>
</comment>
<comment type="cofactor">
    <cofactor evidence="2">
        <name>Ca(2+)</name>
        <dbReference type="ChEBI" id="CHEBI:29108"/>
    </cofactor>
    <text evidence="2">Binds 1 Ca(2+) ion per subunit.</text>
</comment>
<comment type="cofactor">
    <cofactor evidence="2">
        <name>chloride</name>
        <dbReference type="ChEBI" id="CHEBI:17996"/>
    </cofactor>
    <text evidence="2">Binds 1 Cl(-) ion per subunit.</text>
</comment>
<comment type="subunit">
    <text evidence="1">Monomer.</text>
</comment>
<comment type="subcellular location">
    <subcellularLocation>
        <location>Secreted</location>
    </subcellularLocation>
</comment>
<comment type="tissue specificity">
    <text>Expressed in liver and saliva.</text>
</comment>
<comment type="miscellaneous">
    <text>Hepatic and salivary alpha-amylases are encoded by the same gene; however, their mRNAs have different 5'-UTR sequences.</text>
</comment>
<comment type="similarity">
    <text evidence="4">Belongs to the glycosyl hydrolase 13 family.</text>
</comment>
<protein>
    <recommendedName>
        <fullName>Alpha-amylase 1</fullName>
        <ecNumber evidence="2">3.2.1.1</ecNumber>
    </recommendedName>
    <alternativeName>
        <fullName>1,4-alpha-D-glucan glucanohydrolase 1</fullName>
    </alternativeName>
    <alternativeName>
        <fullName>Salivary and hepatic alpha-amylase</fullName>
    </alternativeName>
</protein>
<proteinExistence type="evidence at protein level"/>
<feature type="signal peptide" evidence="3">
    <location>
        <begin position="1"/>
        <end position="15"/>
    </location>
</feature>
<feature type="chain" id="PRO_0000001403" description="Alpha-amylase 1">
    <location>
        <begin position="16"/>
        <end position="511"/>
    </location>
</feature>
<feature type="active site" description="Nucleophile" evidence="2">
    <location>
        <position position="212"/>
    </location>
</feature>
<feature type="active site" description="Proton donor" evidence="2">
    <location>
        <position position="248"/>
    </location>
</feature>
<feature type="binding site" evidence="2">
    <location>
        <position position="115"/>
    </location>
    <ligand>
        <name>Ca(2+)</name>
        <dbReference type="ChEBI" id="CHEBI:29108"/>
    </ligand>
</feature>
<feature type="binding site" evidence="2">
    <location>
        <position position="173"/>
    </location>
    <ligand>
        <name>Ca(2+)</name>
        <dbReference type="ChEBI" id="CHEBI:29108"/>
    </ligand>
</feature>
<feature type="binding site" evidence="2">
    <location>
        <position position="182"/>
    </location>
    <ligand>
        <name>Ca(2+)</name>
        <dbReference type="ChEBI" id="CHEBI:29108"/>
    </ligand>
</feature>
<feature type="binding site" evidence="2">
    <location>
        <position position="210"/>
    </location>
    <ligand>
        <name>chloride</name>
        <dbReference type="ChEBI" id="CHEBI:17996"/>
    </ligand>
</feature>
<feature type="binding site" evidence="2">
    <location>
        <position position="216"/>
    </location>
    <ligand>
        <name>Ca(2+)</name>
        <dbReference type="ChEBI" id="CHEBI:29108"/>
    </ligand>
</feature>
<feature type="binding site" evidence="2">
    <location>
        <position position="313"/>
    </location>
    <ligand>
        <name>chloride</name>
        <dbReference type="ChEBI" id="CHEBI:17996"/>
    </ligand>
</feature>
<feature type="binding site" evidence="2">
    <location>
        <position position="352"/>
    </location>
    <ligand>
        <name>chloride</name>
        <dbReference type="ChEBI" id="CHEBI:17996"/>
    </ligand>
</feature>
<feature type="site" description="Transition state stabilizer" evidence="2">
    <location>
        <position position="315"/>
    </location>
</feature>
<feature type="modified residue" description="Pyrrolidone carboxylic acid" evidence="3">
    <location>
        <position position="16"/>
    </location>
</feature>
<feature type="disulfide bond" evidence="2">
    <location>
        <begin position="43"/>
        <end position="101"/>
    </location>
</feature>
<feature type="disulfide bond" evidence="2">
    <location>
        <begin position="85"/>
        <end position="130"/>
    </location>
</feature>
<feature type="disulfide bond" evidence="2">
    <location>
        <begin position="156"/>
        <end position="175"/>
    </location>
</feature>
<feature type="disulfide bond" evidence="2">
    <location>
        <begin position="393"/>
        <end position="399"/>
    </location>
</feature>
<feature type="disulfide bond" evidence="2">
    <location>
        <begin position="465"/>
        <end position="477"/>
    </location>
</feature>
<feature type="sequence conflict" description="In Ref. 1; AAA37221/CAA24097, 2; CAA24099/CAA24100 and 6; AAA37219." evidence="4" ref="1 2 6">
    <original>V</original>
    <variation>I</variation>
    <location>
        <position position="29"/>
    </location>
</feature>
<feature type="sequence conflict" description="In Ref. 2; CAA24099/CAA24100." evidence="4" ref="2">
    <original>L</original>
    <variation>Q</variation>
    <location>
        <position position="229"/>
    </location>
</feature>
<feature type="sequence conflict" description="In Ref. 1; AAA37221/CAA24097 and 2; CAA24099/CAA24100." evidence="4" ref="1 2">
    <original>F</original>
    <variation>L</variation>
    <location>
        <position position="441"/>
    </location>
</feature>
<keyword id="KW-0106">Calcium</keyword>
<keyword id="KW-0119">Carbohydrate metabolism</keyword>
<keyword id="KW-0868">Chloride</keyword>
<keyword id="KW-1015">Disulfide bond</keyword>
<keyword id="KW-0326">Glycosidase</keyword>
<keyword id="KW-0378">Hydrolase</keyword>
<keyword id="KW-0479">Metal-binding</keyword>
<keyword id="KW-0873">Pyrrolidone carboxylic acid</keyword>
<keyword id="KW-1185">Reference proteome</keyword>
<keyword id="KW-0964">Secreted</keyword>
<keyword id="KW-0732">Signal</keyword>
<reference key="1">
    <citation type="journal article" date="1980" name="Cell">
        <title>Tissue-specific expression of mouse-alpha-amylase genes: nucleotide sequence of isoenzyme mRNAs from pancreas and salivary gland.</title>
        <authorList>
            <person name="Hagenbuechle O."/>
            <person name="Bovey R."/>
            <person name="Young R.A."/>
        </authorList>
    </citation>
    <scope>NUCLEOTIDE SEQUENCE [MRNA]</scope>
    <source>
        <tissue>Salivary gland</tissue>
    </source>
</reference>
<reference key="2">
    <citation type="journal article" date="1981" name="Nature">
        <title>Mouse liver and salivary gland alpha-amylase mRNAs differ only in 5' non-translated sequences.</title>
        <authorList>
            <person name="Hagenbuechle O."/>
            <person name="Tosi M."/>
            <person name="Schibler U."/>
            <person name="Bovey R."/>
            <person name="Wellauer P.K."/>
            <person name="Young R.A."/>
        </authorList>
    </citation>
    <scope>NUCLEOTIDE SEQUENCE [MRNA]</scope>
    <source>
        <tissue>Liver</tissue>
        <tissue>Salivary gland</tissue>
    </source>
</reference>
<reference key="3">
    <citation type="journal article" date="2005" name="Science">
        <title>The transcriptional landscape of the mammalian genome.</title>
        <authorList>
            <person name="Carninci P."/>
            <person name="Kasukawa T."/>
            <person name="Katayama S."/>
            <person name="Gough J."/>
            <person name="Frith M.C."/>
            <person name="Maeda N."/>
            <person name="Oyama R."/>
            <person name="Ravasi T."/>
            <person name="Lenhard B."/>
            <person name="Wells C."/>
            <person name="Kodzius R."/>
            <person name="Shimokawa K."/>
            <person name="Bajic V.B."/>
            <person name="Brenner S.E."/>
            <person name="Batalov S."/>
            <person name="Forrest A.R."/>
            <person name="Zavolan M."/>
            <person name="Davis M.J."/>
            <person name="Wilming L.G."/>
            <person name="Aidinis V."/>
            <person name="Allen J.E."/>
            <person name="Ambesi-Impiombato A."/>
            <person name="Apweiler R."/>
            <person name="Aturaliya R.N."/>
            <person name="Bailey T.L."/>
            <person name="Bansal M."/>
            <person name="Baxter L."/>
            <person name="Beisel K.W."/>
            <person name="Bersano T."/>
            <person name="Bono H."/>
            <person name="Chalk A.M."/>
            <person name="Chiu K.P."/>
            <person name="Choudhary V."/>
            <person name="Christoffels A."/>
            <person name="Clutterbuck D.R."/>
            <person name="Crowe M.L."/>
            <person name="Dalla E."/>
            <person name="Dalrymple B.P."/>
            <person name="de Bono B."/>
            <person name="Della Gatta G."/>
            <person name="di Bernardo D."/>
            <person name="Down T."/>
            <person name="Engstrom P."/>
            <person name="Fagiolini M."/>
            <person name="Faulkner G."/>
            <person name="Fletcher C.F."/>
            <person name="Fukushima T."/>
            <person name="Furuno M."/>
            <person name="Futaki S."/>
            <person name="Gariboldi M."/>
            <person name="Georgii-Hemming P."/>
            <person name="Gingeras T.R."/>
            <person name="Gojobori T."/>
            <person name="Green R.E."/>
            <person name="Gustincich S."/>
            <person name="Harbers M."/>
            <person name="Hayashi Y."/>
            <person name="Hensch T.K."/>
            <person name="Hirokawa N."/>
            <person name="Hill D."/>
            <person name="Huminiecki L."/>
            <person name="Iacono M."/>
            <person name="Ikeo K."/>
            <person name="Iwama A."/>
            <person name="Ishikawa T."/>
            <person name="Jakt M."/>
            <person name="Kanapin A."/>
            <person name="Katoh M."/>
            <person name="Kawasawa Y."/>
            <person name="Kelso J."/>
            <person name="Kitamura H."/>
            <person name="Kitano H."/>
            <person name="Kollias G."/>
            <person name="Krishnan S.P."/>
            <person name="Kruger A."/>
            <person name="Kummerfeld S.K."/>
            <person name="Kurochkin I.V."/>
            <person name="Lareau L.F."/>
            <person name="Lazarevic D."/>
            <person name="Lipovich L."/>
            <person name="Liu J."/>
            <person name="Liuni S."/>
            <person name="McWilliam S."/>
            <person name="Madan Babu M."/>
            <person name="Madera M."/>
            <person name="Marchionni L."/>
            <person name="Matsuda H."/>
            <person name="Matsuzawa S."/>
            <person name="Miki H."/>
            <person name="Mignone F."/>
            <person name="Miyake S."/>
            <person name="Morris K."/>
            <person name="Mottagui-Tabar S."/>
            <person name="Mulder N."/>
            <person name="Nakano N."/>
            <person name="Nakauchi H."/>
            <person name="Ng P."/>
            <person name="Nilsson R."/>
            <person name="Nishiguchi S."/>
            <person name="Nishikawa S."/>
            <person name="Nori F."/>
            <person name="Ohara O."/>
            <person name="Okazaki Y."/>
            <person name="Orlando V."/>
            <person name="Pang K.C."/>
            <person name="Pavan W.J."/>
            <person name="Pavesi G."/>
            <person name="Pesole G."/>
            <person name="Petrovsky N."/>
            <person name="Piazza S."/>
            <person name="Reed J."/>
            <person name="Reid J.F."/>
            <person name="Ring B.Z."/>
            <person name="Ringwald M."/>
            <person name="Rost B."/>
            <person name="Ruan Y."/>
            <person name="Salzberg S.L."/>
            <person name="Sandelin A."/>
            <person name="Schneider C."/>
            <person name="Schoenbach C."/>
            <person name="Sekiguchi K."/>
            <person name="Semple C.A."/>
            <person name="Seno S."/>
            <person name="Sessa L."/>
            <person name="Sheng Y."/>
            <person name="Shibata Y."/>
            <person name="Shimada H."/>
            <person name="Shimada K."/>
            <person name="Silva D."/>
            <person name="Sinclair B."/>
            <person name="Sperling S."/>
            <person name="Stupka E."/>
            <person name="Sugiura K."/>
            <person name="Sultana R."/>
            <person name="Takenaka Y."/>
            <person name="Taki K."/>
            <person name="Tammoja K."/>
            <person name="Tan S.L."/>
            <person name="Tang S."/>
            <person name="Taylor M.S."/>
            <person name="Tegner J."/>
            <person name="Teichmann S.A."/>
            <person name="Ueda H.R."/>
            <person name="van Nimwegen E."/>
            <person name="Verardo R."/>
            <person name="Wei C.L."/>
            <person name="Yagi K."/>
            <person name="Yamanishi H."/>
            <person name="Zabarovsky E."/>
            <person name="Zhu S."/>
            <person name="Zimmer A."/>
            <person name="Hide W."/>
            <person name="Bult C."/>
            <person name="Grimmond S.M."/>
            <person name="Teasdale R.D."/>
            <person name="Liu E.T."/>
            <person name="Brusic V."/>
            <person name="Quackenbush J."/>
            <person name="Wahlestedt C."/>
            <person name="Mattick J.S."/>
            <person name="Hume D.A."/>
            <person name="Kai C."/>
            <person name="Sasaki D."/>
            <person name="Tomaru Y."/>
            <person name="Fukuda S."/>
            <person name="Kanamori-Katayama M."/>
            <person name="Suzuki M."/>
            <person name="Aoki J."/>
            <person name="Arakawa T."/>
            <person name="Iida J."/>
            <person name="Imamura K."/>
            <person name="Itoh M."/>
            <person name="Kato T."/>
            <person name="Kawaji H."/>
            <person name="Kawagashira N."/>
            <person name="Kawashima T."/>
            <person name="Kojima M."/>
            <person name="Kondo S."/>
            <person name="Konno H."/>
            <person name="Nakano K."/>
            <person name="Ninomiya N."/>
            <person name="Nishio T."/>
            <person name="Okada M."/>
            <person name="Plessy C."/>
            <person name="Shibata K."/>
            <person name="Shiraki T."/>
            <person name="Suzuki S."/>
            <person name="Tagami M."/>
            <person name="Waki K."/>
            <person name="Watahiki A."/>
            <person name="Okamura-Oho Y."/>
            <person name="Suzuki H."/>
            <person name="Kawai J."/>
            <person name="Hayashizaki Y."/>
        </authorList>
    </citation>
    <scope>NUCLEOTIDE SEQUENCE [LARGE SCALE MRNA]</scope>
    <source>
        <strain>C57BL/6J</strain>
        <tissue>Testis</tissue>
    </source>
</reference>
<reference key="4">
    <citation type="submission" date="2005-09" db="EMBL/GenBank/DDBJ databases">
        <authorList>
            <person name="Mural R.J."/>
            <person name="Adams M.D."/>
            <person name="Myers E.W."/>
            <person name="Smith H.O."/>
            <person name="Venter J.C."/>
        </authorList>
    </citation>
    <scope>NUCLEOTIDE SEQUENCE [LARGE SCALE GENOMIC DNA]</scope>
</reference>
<reference key="5">
    <citation type="journal article" date="2004" name="Genome Res.">
        <title>The status, quality, and expansion of the NIH full-length cDNA project: the Mammalian Gene Collection (MGC).</title>
        <authorList>
            <consortium name="The MGC Project Team"/>
        </authorList>
    </citation>
    <scope>NUCLEOTIDE SEQUENCE [LARGE SCALE MRNA]</scope>
    <source>
        <strain>FVB/N</strain>
        <tissue>Mammary tumor</tissue>
    </source>
</reference>
<reference key="6">
    <citation type="journal article" date="1981" name="Cell">
        <title>A single mouse alpha-amylase gene specifies two different tissue-specific mRNAs.</title>
        <authorList>
            <person name="Young R.A."/>
            <person name="Hagenbuechle O."/>
            <person name="Schibler U."/>
        </authorList>
    </citation>
    <scope>NUCLEOTIDE SEQUENCE [GENOMIC DNA] OF 1-94</scope>
    <source>
        <strain>A/J</strain>
        <tissue>Liver</tissue>
        <tissue>Salivary gland</tissue>
    </source>
</reference>
<reference key="7">
    <citation type="journal article" date="1982" name="J. Mol. Biol.">
        <title>The mouse alpha-amylase multigene family. Sequence organization of members expressed in the pancreas, salivary gland and liver.</title>
        <authorList>
            <person name="Schibler U."/>
            <person name="Pittet A.-C."/>
            <person name="Young R.A."/>
            <person name="Hagenbuechle O."/>
            <person name="Tosi M."/>
            <person name="Gellman S."/>
            <person name="Wellauer P.K."/>
        </authorList>
    </citation>
    <scope>NUCLEOTIDE SEQUENCE [GENOMIC DNA] OF 270-292</scope>
    <source>
        <strain>A/J</strain>
        <tissue>Liver</tissue>
        <tissue>Salivary gland</tissue>
    </source>
</reference>
<reference key="8">
    <citation type="journal article" date="1981" name="FEBS Lett.">
        <title>Characterization of the amino termini of mouse salivary and pancreatic amylases.</title>
        <authorList>
            <person name="Karn R.C."/>
            <person name="Petersen T.E."/>
            <person name="Hjorth J.P."/>
            <person name="Nieles J.T."/>
            <person name="Roepstorff P."/>
        </authorList>
    </citation>
    <scope>SIGNAL SEQUENCE CLEAVAGE SITE</scope>
    <scope>PYROGLUTAMATE FORMATION AT GLN-16</scope>
</reference>
<reference key="9">
    <citation type="journal article" date="2010" name="Cell">
        <title>A tissue-specific atlas of mouse protein phosphorylation and expression.</title>
        <authorList>
            <person name="Huttlin E.L."/>
            <person name="Jedrychowski M.P."/>
            <person name="Elias J.E."/>
            <person name="Goswami T."/>
            <person name="Rad R."/>
            <person name="Beausoleil S.A."/>
            <person name="Villen J."/>
            <person name="Haas W."/>
            <person name="Sowa M.E."/>
            <person name="Gygi S.P."/>
        </authorList>
    </citation>
    <scope>IDENTIFICATION BY MASS SPECTROMETRY [LARGE SCALE ANALYSIS]</scope>
    <source>
        <tissue>Brown adipose tissue</tissue>
        <tissue>Kidney</tissue>
    </source>
</reference>
<gene>
    <name type="primary">Amy1</name>
    <name type="synonym">Amy-1-a</name>
    <name type="synonym">Amy1a</name>
</gene>
<evidence type="ECO:0000250" key="1"/>
<evidence type="ECO:0000250" key="2">
    <source>
        <dbReference type="UniProtKB" id="P04746"/>
    </source>
</evidence>
<evidence type="ECO:0000269" key="3">
    <source ref="8"/>
</evidence>
<evidence type="ECO:0000305" key="4"/>
<sequence>MKFFLLLSLIGFCWAQYDPHTQYGRTAIVHLFEWRWVDIAKECERYLAPNGFAGVQVSPPNENIVVHSPSRPWWERYQPISYKICSRSGNEDEFRDMVNRCNNVGVRIYVDAVINHMCGVGAQAGQSSTCGSYFNPNNRDFPGVPYSGFDFNDGKCRTASGGIENYQDAAQVRDCRLSGLLDLALEKDYVRTKVADYMNHLIDIGVAGFRLDASKHMWPGDIKAILDKLHNLNTKWFSQGSRPFIFQEVIDLGGEAVSSNEYFGNGRVTEFKYGAKLGKVMRKWDGEKMSYLKNWGEGWGLMPSDRALVFVDNHDNQRGHGAGGASILTFWDARLYKMAVGFMLAHPYGFTRVMSSYYWPRNFQNGKDVNDWVGPPNNNGKTKEVSINPDSTCGNDWICEHRWRQIRNMVAFRNVVNGQPFANWWDNDSNQVAFGRGNKGFIVFNNDDWALSETLQTGLPAGTYCDVISGDKVDGNCTGIKVYVGNDGKAHFSISNSAEDPFIAIHAESKI</sequence>
<accession>P00687</accession>
<accession>Q921Y7</accession>
<dbReference type="EC" id="3.2.1.1" evidence="2"/>
<dbReference type="EMBL" id="J00356">
    <property type="protein sequence ID" value="AAA37221.1"/>
    <property type="molecule type" value="mRNA"/>
</dbReference>
<dbReference type="EMBL" id="V00717">
    <property type="protein sequence ID" value="CAA24097.1"/>
    <property type="molecule type" value="mRNA"/>
</dbReference>
<dbReference type="EMBL" id="V00719">
    <property type="protein sequence ID" value="CAA24099.1"/>
    <property type="molecule type" value="mRNA"/>
</dbReference>
<dbReference type="EMBL" id="V00720">
    <property type="protein sequence ID" value="CAA24100.1"/>
    <property type="molecule type" value="mRNA"/>
</dbReference>
<dbReference type="EMBL" id="AK029642">
    <property type="protein sequence ID" value="BAC26543.1"/>
    <property type="molecule type" value="mRNA"/>
</dbReference>
<dbReference type="EMBL" id="CH466532">
    <property type="protein sequence ID" value="EDL12410.1"/>
    <property type="molecule type" value="Genomic_DNA"/>
</dbReference>
<dbReference type="EMBL" id="CH466532">
    <property type="protein sequence ID" value="EDL12411.1"/>
    <property type="molecule type" value="Genomic_DNA"/>
</dbReference>
<dbReference type="EMBL" id="CH466532">
    <property type="protein sequence ID" value="EDL12412.1"/>
    <property type="molecule type" value="Genomic_DNA"/>
</dbReference>
<dbReference type="EMBL" id="BC009121">
    <property type="protein sequence ID" value="AAH09121.1"/>
    <property type="molecule type" value="mRNA"/>
</dbReference>
<dbReference type="EMBL" id="J00353">
    <property type="protein sequence ID" value="AAA37219.1"/>
    <property type="molecule type" value="Genomic_DNA"/>
</dbReference>
<dbReference type="EMBL" id="J00354">
    <property type="protein sequence ID" value="AAA37220.1"/>
    <property type="molecule type" value="Genomic_DNA"/>
</dbReference>
<dbReference type="CCDS" id="CCDS17776.1"/>
<dbReference type="PIR" id="A90798">
    <property type="entry name" value="ALMSS"/>
</dbReference>
<dbReference type="RefSeq" id="NP_001103975.1">
    <property type="nucleotide sequence ID" value="NM_001110505.1"/>
</dbReference>
<dbReference type="RefSeq" id="NP_031472.2">
    <property type="nucleotide sequence ID" value="NM_007446.2"/>
</dbReference>
<dbReference type="SMR" id="P00687"/>
<dbReference type="BioGRID" id="198093">
    <property type="interactions" value="2"/>
</dbReference>
<dbReference type="FunCoup" id="P00687">
    <property type="interactions" value="184"/>
</dbReference>
<dbReference type="IntAct" id="P00687">
    <property type="interactions" value="16"/>
</dbReference>
<dbReference type="STRING" id="10090.ENSMUSP00000070368"/>
<dbReference type="CAZy" id="GH13">
    <property type="family name" value="Glycoside Hydrolase Family 13"/>
</dbReference>
<dbReference type="iPTMnet" id="P00687"/>
<dbReference type="PhosphoSitePlus" id="P00687"/>
<dbReference type="SwissPalm" id="P00687"/>
<dbReference type="CPTAC" id="non-CPTAC-3761"/>
<dbReference type="jPOST" id="P00687"/>
<dbReference type="PaxDb" id="10090-ENSMUSP00000070368"/>
<dbReference type="PeptideAtlas" id="P00687"/>
<dbReference type="ProteomicsDB" id="282085"/>
<dbReference type="Pumba" id="P00687"/>
<dbReference type="DNASU" id="11722"/>
<dbReference type="Ensembl" id="ENSMUST00000067980.12">
    <property type="protein sequence ID" value="ENSMUSP00000070368.6"/>
    <property type="gene ID" value="ENSMUSG00000074264.13"/>
</dbReference>
<dbReference type="Ensembl" id="ENSMUST00000106540.8">
    <property type="protein sequence ID" value="ENSMUSP00000102150.2"/>
    <property type="gene ID" value="ENSMUSG00000074264.13"/>
</dbReference>
<dbReference type="GeneID" id="11722"/>
<dbReference type="KEGG" id="mmu:11722"/>
<dbReference type="UCSC" id="uc008rba.2">
    <property type="organism name" value="mouse"/>
</dbReference>
<dbReference type="AGR" id="MGI:88019"/>
<dbReference type="CTD" id="11722"/>
<dbReference type="MGI" id="MGI:88019">
    <property type="gene designation" value="Amy1"/>
</dbReference>
<dbReference type="VEuPathDB" id="HostDB:ENSMUSG00000074264"/>
<dbReference type="eggNOG" id="KOG2212">
    <property type="taxonomic scope" value="Eukaryota"/>
</dbReference>
<dbReference type="GeneTree" id="ENSGT00940000163518"/>
<dbReference type="HOGENOM" id="CLU_013336_2_1_1"/>
<dbReference type="InParanoid" id="P00687"/>
<dbReference type="OMA" id="FRYAYDL"/>
<dbReference type="OrthoDB" id="550577at2759"/>
<dbReference type="PhylomeDB" id="P00687"/>
<dbReference type="TreeFam" id="TF312850"/>
<dbReference type="BioGRID-ORCS" id="11722">
    <property type="hits" value="0 hits in 78 CRISPR screens"/>
</dbReference>
<dbReference type="ChiTaRS" id="Amy1">
    <property type="organism name" value="mouse"/>
</dbReference>
<dbReference type="PRO" id="PR:P00687"/>
<dbReference type="Proteomes" id="UP000000589">
    <property type="component" value="Chromosome 3"/>
</dbReference>
<dbReference type="RNAct" id="P00687">
    <property type="molecule type" value="protein"/>
</dbReference>
<dbReference type="Bgee" id="ENSMUSG00000074264">
    <property type="expression patterns" value="Expressed in parotid gland and 210 other cell types or tissues"/>
</dbReference>
<dbReference type="ExpressionAtlas" id="P00687">
    <property type="expression patterns" value="baseline and differential"/>
</dbReference>
<dbReference type="GO" id="GO:0005615">
    <property type="term" value="C:extracellular space"/>
    <property type="evidence" value="ECO:0000314"/>
    <property type="project" value="MGI"/>
</dbReference>
<dbReference type="GO" id="GO:0004556">
    <property type="term" value="F:alpha-amylase activity"/>
    <property type="evidence" value="ECO:0007669"/>
    <property type="project" value="UniProtKB-EC"/>
</dbReference>
<dbReference type="GO" id="GO:0016160">
    <property type="term" value="F:amylase activity"/>
    <property type="evidence" value="ECO:0000314"/>
    <property type="project" value="MGI"/>
</dbReference>
<dbReference type="GO" id="GO:0046872">
    <property type="term" value="F:metal ion binding"/>
    <property type="evidence" value="ECO:0007669"/>
    <property type="project" value="UniProtKB-KW"/>
</dbReference>
<dbReference type="GO" id="GO:0005975">
    <property type="term" value="P:carbohydrate metabolic process"/>
    <property type="evidence" value="ECO:0007669"/>
    <property type="project" value="InterPro"/>
</dbReference>
<dbReference type="GO" id="GO:0009617">
    <property type="term" value="P:response to bacterium"/>
    <property type="evidence" value="ECO:0000270"/>
    <property type="project" value="MGI"/>
</dbReference>
<dbReference type="CDD" id="cd11317">
    <property type="entry name" value="AmyAc_bac_euk_AmyA"/>
    <property type="match status" value="1"/>
</dbReference>
<dbReference type="FunFam" id="2.60.40.1180:FF:000020">
    <property type="entry name" value="Pancreatic alpha-amylase"/>
    <property type="match status" value="1"/>
</dbReference>
<dbReference type="FunFam" id="3.20.20.80:FF:000056">
    <property type="entry name" value="Pancreatic alpha-amylase"/>
    <property type="match status" value="1"/>
</dbReference>
<dbReference type="Gene3D" id="3.20.20.80">
    <property type="entry name" value="Glycosidases"/>
    <property type="match status" value="1"/>
</dbReference>
<dbReference type="Gene3D" id="2.60.40.1180">
    <property type="entry name" value="Golgi alpha-mannosidase II"/>
    <property type="match status" value="1"/>
</dbReference>
<dbReference type="InterPro" id="IPR006048">
    <property type="entry name" value="A-amylase/branching_C"/>
</dbReference>
<dbReference type="InterPro" id="IPR031319">
    <property type="entry name" value="A-amylase_C"/>
</dbReference>
<dbReference type="InterPro" id="IPR006046">
    <property type="entry name" value="Alpha_amylase"/>
</dbReference>
<dbReference type="InterPro" id="IPR006047">
    <property type="entry name" value="Glyco_hydro_13_cat_dom"/>
</dbReference>
<dbReference type="InterPro" id="IPR013780">
    <property type="entry name" value="Glyco_hydro_b"/>
</dbReference>
<dbReference type="InterPro" id="IPR017853">
    <property type="entry name" value="Glycoside_hydrolase_SF"/>
</dbReference>
<dbReference type="PANTHER" id="PTHR43447">
    <property type="entry name" value="ALPHA-AMYLASE"/>
    <property type="match status" value="1"/>
</dbReference>
<dbReference type="Pfam" id="PF00128">
    <property type="entry name" value="Alpha-amylase"/>
    <property type="match status" value="1"/>
</dbReference>
<dbReference type="Pfam" id="PF02806">
    <property type="entry name" value="Alpha-amylase_C"/>
    <property type="match status" value="1"/>
</dbReference>
<dbReference type="PRINTS" id="PR00110">
    <property type="entry name" value="ALPHAAMYLASE"/>
</dbReference>
<dbReference type="SMART" id="SM00642">
    <property type="entry name" value="Aamy"/>
    <property type="match status" value="1"/>
</dbReference>
<dbReference type="SMART" id="SM00632">
    <property type="entry name" value="Aamy_C"/>
    <property type="match status" value="1"/>
</dbReference>
<dbReference type="SUPFAM" id="SSF51445">
    <property type="entry name" value="(Trans)glycosidases"/>
    <property type="match status" value="1"/>
</dbReference>
<dbReference type="SUPFAM" id="SSF51011">
    <property type="entry name" value="Glycosyl hydrolase domain"/>
    <property type="match status" value="1"/>
</dbReference>